<name>METK_THEGJ</name>
<protein>
    <recommendedName>
        <fullName evidence="1">S-adenosylmethionine synthase</fullName>
        <shortName evidence="1">AdoMet synthase</shortName>
        <ecNumber evidence="1">2.5.1.6</ecNumber>
    </recommendedName>
    <alternativeName>
        <fullName evidence="1">Methionine adenosyltransferase</fullName>
    </alternativeName>
</protein>
<reference key="1">
    <citation type="journal article" date="2007" name="Genome Biol.">
        <title>Genome analysis and genome-wide proteomics of Thermococcus gammatolerans, the most radioresistant organism known amongst the Archaea.</title>
        <authorList>
            <person name="Zivanovic Y."/>
            <person name="Armengaud J."/>
            <person name="Lagorce A."/>
            <person name="Leplat C."/>
            <person name="Guerin P."/>
            <person name="Dutertre M."/>
            <person name="Anthouard V."/>
            <person name="Forterre P."/>
            <person name="Wincker P."/>
            <person name="Confalonieri F."/>
        </authorList>
    </citation>
    <scope>NUCLEOTIDE SEQUENCE [LARGE SCALE GENOMIC DNA]</scope>
    <source>
        <strain>DSM 15229 / JCM 11827 / EJ3</strain>
    </source>
</reference>
<dbReference type="EC" id="2.5.1.6" evidence="1"/>
<dbReference type="EMBL" id="CP001398">
    <property type="protein sequence ID" value="ACS33079.1"/>
    <property type="molecule type" value="Genomic_DNA"/>
</dbReference>
<dbReference type="RefSeq" id="WP_015858197.1">
    <property type="nucleotide sequence ID" value="NC_012804.1"/>
</dbReference>
<dbReference type="SMR" id="C5A4B7"/>
<dbReference type="STRING" id="593117.TGAM_0577"/>
<dbReference type="PaxDb" id="593117-TGAM_0577"/>
<dbReference type="GeneID" id="7987200"/>
<dbReference type="KEGG" id="tga:TGAM_0577"/>
<dbReference type="PATRIC" id="fig|593117.10.peg.575"/>
<dbReference type="eggNOG" id="arCOG01678">
    <property type="taxonomic scope" value="Archaea"/>
</dbReference>
<dbReference type="HOGENOM" id="CLU_057642_0_0_2"/>
<dbReference type="OrthoDB" id="204488at2157"/>
<dbReference type="UniPathway" id="UPA00315">
    <property type="reaction ID" value="UER00080"/>
</dbReference>
<dbReference type="Proteomes" id="UP000001488">
    <property type="component" value="Chromosome"/>
</dbReference>
<dbReference type="GO" id="GO:0005524">
    <property type="term" value="F:ATP binding"/>
    <property type="evidence" value="ECO:0007669"/>
    <property type="project" value="UniProtKB-UniRule"/>
</dbReference>
<dbReference type="GO" id="GO:0000287">
    <property type="term" value="F:magnesium ion binding"/>
    <property type="evidence" value="ECO:0007669"/>
    <property type="project" value="UniProtKB-UniRule"/>
</dbReference>
<dbReference type="GO" id="GO:0004478">
    <property type="term" value="F:methionine adenosyltransferase activity"/>
    <property type="evidence" value="ECO:0007669"/>
    <property type="project" value="UniProtKB-UniRule"/>
</dbReference>
<dbReference type="GO" id="GO:0006730">
    <property type="term" value="P:one-carbon metabolic process"/>
    <property type="evidence" value="ECO:0007669"/>
    <property type="project" value="UniProtKB-KW"/>
</dbReference>
<dbReference type="GO" id="GO:0006556">
    <property type="term" value="P:S-adenosylmethionine biosynthetic process"/>
    <property type="evidence" value="ECO:0007669"/>
    <property type="project" value="UniProtKB-UniRule"/>
</dbReference>
<dbReference type="Gene3D" id="3.30.300.10">
    <property type="match status" value="1"/>
</dbReference>
<dbReference type="Gene3D" id="3.30.300.280">
    <property type="entry name" value="S-adenosylmethionine synthetase, C-terminal domain"/>
    <property type="match status" value="2"/>
</dbReference>
<dbReference type="HAMAP" id="MF_00136">
    <property type="entry name" value="S_AdoMet_synth2"/>
    <property type="match status" value="1"/>
</dbReference>
<dbReference type="InterPro" id="IPR027790">
    <property type="entry name" value="AdoMet_synthase_2_family"/>
</dbReference>
<dbReference type="InterPro" id="IPR042544">
    <property type="entry name" value="AdoMet_synthase_3"/>
</dbReference>
<dbReference type="InterPro" id="IPR002795">
    <property type="entry name" value="S-AdoMet_synthetase_arc"/>
</dbReference>
<dbReference type="NCBIfam" id="NF003364">
    <property type="entry name" value="PRK04439.1-3"/>
    <property type="match status" value="1"/>
</dbReference>
<dbReference type="NCBIfam" id="NF003366">
    <property type="entry name" value="PRK04439.1-5"/>
    <property type="match status" value="1"/>
</dbReference>
<dbReference type="PANTHER" id="PTHR36697">
    <property type="entry name" value="S-ADENOSYLMETHIONINE SYNTHASE"/>
    <property type="match status" value="1"/>
</dbReference>
<dbReference type="PANTHER" id="PTHR36697:SF1">
    <property type="entry name" value="S-ADENOSYLMETHIONINE SYNTHASE"/>
    <property type="match status" value="1"/>
</dbReference>
<dbReference type="Pfam" id="PF01941">
    <property type="entry name" value="AdoMet_Synthase"/>
    <property type="match status" value="1"/>
</dbReference>
<proteinExistence type="inferred from homology"/>
<evidence type="ECO:0000255" key="1">
    <source>
        <dbReference type="HAMAP-Rule" id="MF_00136"/>
    </source>
</evidence>
<gene>
    <name evidence="1" type="primary">mat</name>
    <name type="ordered locus">TGAM_0577</name>
</gene>
<sequence length="405" mass="44529">MVEKVRNIVVEELVRTPVEMQEVELVERKGIGHPDSIADGIAEAVSRALSREYLKRYGIILHHNTDQVEVVGGRAYPQFGGGEVIKPIYILLSGRAVELVDREEFPVHQVAIKAAKDYLKKAVRHLDIENHVVIDSRIGQGSVDLVGVFNKAKENPIPLANDTSFGVGYAPLSETERIVLETEKLLNSEEFKKKCPAVGEDIKVMGLRKGDEIDLTIAAAIVDSEVSNPDDYMAVKEEIYEAAKGVVEEHTQRPTKIFVNTADDPKNGIYYITVTGTSAEAGDDGSVGRGNRVNGLITPNRHMSMEAAAGKNPVSHVGKIYNLLSMLIANDIAEQVEGVQEVYVRILSQIGKPIDEPLVASIQIIPKKGYSIDVLQKPAYEIADAWLADVTKIQKMILDDKLNVF</sequence>
<feature type="chain" id="PRO_1000203220" description="S-adenosylmethionine synthase">
    <location>
        <begin position="1"/>
        <end position="405"/>
    </location>
</feature>
<feature type="binding site" evidence="1">
    <location>
        <begin position="139"/>
        <end position="144"/>
    </location>
    <ligand>
        <name>ATP</name>
        <dbReference type="ChEBI" id="CHEBI:30616"/>
    </ligand>
</feature>
<accession>C5A4B7</accession>
<keyword id="KW-0067">ATP-binding</keyword>
<keyword id="KW-0460">Magnesium</keyword>
<keyword id="KW-0547">Nucleotide-binding</keyword>
<keyword id="KW-0554">One-carbon metabolism</keyword>
<keyword id="KW-1185">Reference proteome</keyword>
<keyword id="KW-0808">Transferase</keyword>
<comment type="function">
    <text evidence="1">Catalyzes the formation of S-adenosylmethionine from methionine and ATP.</text>
</comment>
<comment type="catalytic activity">
    <reaction evidence="1">
        <text>L-methionine + ATP + H2O = S-adenosyl-L-methionine + phosphate + diphosphate</text>
        <dbReference type="Rhea" id="RHEA:21080"/>
        <dbReference type="ChEBI" id="CHEBI:15377"/>
        <dbReference type="ChEBI" id="CHEBI:30616"/>
        <dbReference type="ChEBI" id="CHEBI:33019"/>
        <dbReference type="ChEBI" id="CHEBI:43474"/>
        <dbReference type="ChEBI" id="CHEBI:57844"/>
        <dbReference type="ChEBI" id="CHEBI:59789"/>
        <dbReference type="EC" id="2.5.1.6"/>
    </reaction>
</comment>
<comment type="cofactor">
    <cofactor evidence="1">
        <name>Mg(2+)</name>
        <dbReference type="ChEBI" id="CHEBI:18420"/>
    </cofactor>
</comment>
<comment type="pathway">
    <text evidence="1">Amino-acid biosynthesis; S-adenosyl-L-methionine biosynthesis; S-adenosyl-L-methionine from L-methionine: step 1/1.</text>
</comment>
<comment type="similarity">
    <text evidence="1">Belongs to the AdoMet synthase 2 family.</text>
</comment>
<organism>
    <name type="scientific">Thermococcus gammatolerans (strain DSM 15229 / JCM 11827 / EJ3)</name>
    <dbReference type="NCBI Taxonomy" id="593117"/>
    <lineage>
        <taxon>Archaea</taxon>
        <taxon>Methanobacteriati</taxon>
        <taxon>Methanobacteriota</taxon>
        <taxon>Thermococci</taxon>
        <taxon>Thermococcales</taxon>
        <taxon>Thermococcaceae</taxon>
        <taxon>Thermococcus</taxon>
    </lineage>
</organism>